<accession>B1LG84</accession>
<organism>
    <name type="scientific">Escherichia coli (strain SMS-3-5 / SECEC)</name>
    <dbReference type="NCBI Taxonomy" id="439855"/>
    <lineage>
        <taxon>Bacteria</taxon>
        <taxon>Pseudomonadati</taxon>
        <taxon>Pseudomonadota</taxon>
        <taxon>Gammaproteobacteria</taxon>
        <taxon>Enterobacterales</taxon>
        <taxon>Enterobacteriaceae</taxon>
        <taxon>Escherichia</taxon>
    </lineage>
</organism>
<sequence>MSQNQEISKKEQYNLNKLQKRLRRNVGEAIADFNMIEEGDRIMVCLSGGKDSYTMLEILRNLQQSAPINFSLVAVNLDQKQPGFPEHVLPEYLETLGVEYKIVEENTYGIVKEKIPEGKTTCSLCSRLRRGILYRTATELGATKIALGHHRDDILQTLFLNMFYGGKMKGMPPKLMSDDGKHIVIRPLAYCREKDIQRFADAKAFPIIPCNLCGSQPNLQRQVIADMLRDWDKRYPGRIETMFSAMQNVVPSHLCDTNLFDFKGITHGSEVVNGGDLAFDREEIPLQPAGWQPEEDENQLDELRLNVVEVK</sequence>
<evidence type="ECO:0000255" key="1">
    <source>
        <dbReference type="HAMAP-Rule" id="MF_01850"/>
    </source>
</evidence>
<keyword id="KW-0004">4Fe-4S</keyword>
<keyword id="KW-0067">ATP-binding</keyword>
<keyword id="KW-0963">Cytoplasm</keyword>
<keyword id="KW-0408">Iron</keyword>
<keyword id="KW-0411">Iron-sulfur</keyword>
<keyword id="KW-0460">Magnesium</keyword>
<keyword id="KW-0479">Metal-binding</keyword>
<keyword id="KW-0547">Nucleotide-binding</keyword>
<keyword id="KW-0694">RNA-binding</keyword>
<keyword id="KW-0808">Transferase</keyword>
<keyword id="KW-0819">tRNA processing</keyword>
<keyword id="KW-0820">tRNA-binding</keyword>
<comment type="function">
    <text evidence="1">Catalyzes the ATP-dependent 2-thiolation of cytidine in position 32 of tRNA, to form 2-thiocytidine (s(2)C32). The sulfur atoms are provided by the cysteine/cysteine desulfurase (IscS) system.</text>
</comment>
<comment type="catalytic activity">
    <reaction evidence="1">
        <text>cytidine(32) in tRNA + S-sulfanyl-L-cysteinyl-[cysteine desulfurase] + AH2 + ATP = 2-thiocytidine(32) in tRNA + L-cysteinyl-[cysteine desulfurase] + A + AMP + diphosphate + H(+)</text>
        <dbReference type="Rhea" id="RHEA:57048"/>
        <dbReference type="Rhea" id="RHEA-COMP:10288"/>
        <dbReference type="Rhea" id="RHEA-COMP:12157"/>
        <dbReference type="Rhea" id="RHEA-COMP:12158"/>
        <dbReference type="Rhea" id="RHEA-COMP:14821"/>
        <dbReference type="ChEBI" id="CHEBI:13193"/>
        <dbReference type="ChEBI" id="CHEBI:15378"/>
        <dbReference type="ChEBI" id="CHEBI:17499"/>
        <dbReference type="ChEBI" id="CHEBI:29950"/>
        <dbReference type="ChEBI" id="CHEBI:30616"/>
        <dbReference type="ChEBI" id="CHEBI:33019"/>
        <dbReference type="ChEBI" id="CHEBI:61963"/>
        <dbReference type="ChEBI" id="CHEBI:82748"/>
        <dbReference type="ChEBI" id="CHEBI:141453"/>
        <dbReference type="ChEBI" id="CHEBI:456215"/>
    </reaction>
    <physiologicalReaction direction="left-to-right" evidence="1">
        <dbReference type="Rhea" id="RHEA:57049"/>
    </physiologicalReaction>
</comment>
<comment type="cofactor">
    <cofactor evidence="1">
        <name>Mg(2+)</name>
        <dbReference type="ChEBI" id="CHEBI:18420"/>
    </cofactor>
</comment>
<comment type="cofactor">
    <cofactor evidence="1">
        <name>[4Fe-4S] cluster</name>
        <dbReference type="ChEBI" id="CHEBI:49883"/>
    </cofactor>
    <text evidence="1">Binds 1 [4Fe-4S] cluster per subunit. The cluster is chelated by three Cys residues, the fourth Fe has a free coordination site that may bind a sulfur atom transferred from the persulfide of IscS.</text>
</comment>
<comment type="pathway">
    <text evidence="1">tRNA modification.</text>
</comment>
<comment type="subunit">
    <text evidence="1">Homodimer.</text>
</comment>
<comment type="subcellular location">
    <subcellularLocation>
        <location evidence="1">Cytoplasm</location>
    </subcellularLocation>
</comment>
<comment type="miscellaneous">
    <text evidence="1">The thiolation reaction likely consists of two steps: a first activation step by ATP to form an adenylated intermediate of the target base of tRNA, and a second nucleophilic substitution step of the sulfur (S) atom supplied by the hydrosulfide attached to the Fe-S cluster.</text>
</comment>
<comment type="similarity">
    <text evidence="1">Belongs to the TtcA family.</text>
</comment>
<gene>
    <name evidence="1" type="primary">ttcA</name>
    <name type="ordered locus">EcSMS35_1778</name>
</gene>
<feature type="chain" id="PRO_0000348719" description="tRNA-cytidine(32) 2-sulfurtransferase">
    <location>
        <begin position="1"/>
        <end position="311"/>
    </location>
</feature>
<feature type="short sequence motif" description="PP-loop motif" evidence="1">
    <location>
        <begin position="47"/>
        <end position="52"/>
    </location>
</feature>
<feature type="binding site" evidence="1">
    <location>
        <position position="122"/>
    </location>
    <ligand>
        <name>[4Fe-4S] cluster</name>
        <dbReference type="ChEBI" id="CHEBI:49883"/>
    </ligand>
</feature>
<feature type="binding site" evidence="1">
    <location>
        <position position="125"/>
    </location>
    <ligand>
        <name>[4Fe-4S] cluster</name>
        <dbReference type="ChEBI" id="CHEBI:49883"/>
    </ligand>
</feature>
<feature type="binding site" evidence="1">
    <location>
        <position position="213"/>
    </location>
    <ligand>
        <name>[4Fe-4S] cluster</name>
        <dbReference type="ChEBI" id="CHEBI:49883"/>
    </ligand>
</feature>
<name>TTCA_ECOSM</name>
<proteinExistence type="inferred from homology"/>
<reference key="1">
    <citation type="journal article" date="2008" name="J. Bacteriol.">
        <title>Insights into the environmental resistance gene pool from the genome sequence of the multidrug-resistant environmental isolate Escherichia coli SMS-3-5.</title>
        <authorList>
            <person name="Fricke W.F."/>
            <person name="Wright M.S."/>
            <person name="Lindell A.H."/>
            <person name="Harkins D.M."/>
            <person name="Baker-Austin C."/>
            <person name="Ravel J."/>
            <person name="Stepanauskas R."/>
        </authorList>
    </citation>
    <scope>NUCLEOTIDE SEQUENCE [LARGE SCALE GENOMIC DNA]</scope>
    <source>
        <strain>SMS-3-5 / SECEC</strain>
    </source>
</reference>
<protein>
    <recommendedName>
        <fullName evidence="1">tRNA-cytidine(32) 2-sulfurtransferase</fullName>
        <ecNumber evidence="1">2.8.1.-</ecNumber>
    </recommendedName>
    <alternativeName>
        <fullName evidence="1">Two-thiocytidine biosynthesis protein A</fullName>
    </alternativeName>
    <alternativeName>
        <fullName evidence="1">tRNA 2-thiocytidine biosynthesis protein TtcA</fullName>
    </alternativeName>
</protein>
<dbReference type="EC" id="2.8.1.-" evidence="1"/>
<dbReference type="EMBL" id="CP000970">
    <property type="protein sequence ID" value="ACB19885.1"/>
    <property type="molecule type" value="Genomic_DNA"/>
</dbReference>
<dbReference type="RefSeq" id="WP_000081424.1">
    <property type="nucleotide sequence ID" value="NC_010498.1"/>
</dbReference>
<dbReference type="SMR" id="B1LG84"/>
<dbReference type="KEGG" id="ecm:EcSMS35_1778"/>
<dbReference type="HOGENOM" id="CLU_026481_0_0_6"/>
<dbReference type="Proteomes" id="UP000007011">
    <property type="component" value="Chromosome"/>
</dbReference>
<dbReference type="GO" id="GO:0005737">
    <property type="term" value="C:cytoplasm"/>
    <property type="evidence" value="ECO:0007669"/>
    <property type="project" value="UniProtKB-SubCell"/>
</dbReference>
<dbReference type="GO" id="GO:0051539">
    <property type="term" value="F:4 iron, 4 sulfur cluster binding"/>
    <property type="evidence" value="ECO:0007669"/>
    <property type="project" value="UniProtKB-UniRule"/>
</dbReference>
<dbReference type="GO" id="GO:0005524">
    <property type="term" value="F:ATP binding"/>
    <property type="evidence" value="ECO:0007669"/>
    <property type="project" value="UniProtKB-UniRule"/>
</dbReference>
<dbReference type="GO" id="GO:0000287">
    <property type="term" value="F:magnesium ion binding"/>
    <property type="evidence" value="ECO:0007669"/>
    <property type="project" value="UniProtKB-UniRule"/>
</dbReference>
<dbReference type="GO" id="GO:0016783">
    <property type="term" value="F:sulfurtransferase activity"/>
    <property type="evidence" value="ECO:0007669"/>
    <property type="project" value="UniProtKB-UniRule"/>
</dbReference>
<dbReference type="GO" id="GO:0000049">
    <property type="term" value="F:tRNA binding"/>
    <property type="evidence" value="ECO:0007669"/>
    <property type="project" value="UniProtKB-KW"/>
</dbReference>
<dbReference type="GO" id="GO:0034227">
    <property type="term" value="P:tRNA thio-modification"/>
    <property type="evidence" value="ECO:0007669"/>
    <property type="project" value="UniProtKB-UniRule"/>
</dbReference>
<dbReference type="CDD" id="cd24138">
    <property type="entry name" value="TtcA-like"/>
    <property type="match status" value="1"/>
</dbReference>
<dbReference type="FunFam" id="3.40.50.620:FF:000046">
    <property type="entry name" value="tRNA-cytidine(32) 2-sulfurtransferase"/>
    <property type="match status" value="1"/>
</dbReference>
<dbReference type="Gene3D" id="3.40.50.620">
    <property type="entry name" value="HUPs"/>
    <property type="match status" value="1"/>
</dbReference>
<dbReference type="HAMAP" id="MF_01850">
    <property type="entry name" value="TtcA"/>
    <property type="match status" value="1"/>
</dbReference>
<dbReference type="InterPro" id="IPR014729">
    <property type="entry name" value="Rossmann-like_a/b/a_fold"/>
</dbReference>
<dbReference type="InterPro" id="IPR011063">
    <property type="entry name" value="TilS/TtcA_N"/>
</dbReference>
<dbReference type="InterPro" id="IPR012089">
    <property type="entry name" value="tRNA_Cyd_32_2_STrfase"/>
</dbReference>
<dbReference type="InterPro" id="IPR035107">
    <property type="entry name" value="tRNA_thiolation_TtcA_Ctu1"/>
</dbReference>
<dbReference type="NCBIfam" id="NF007972">
    <property type="entry name" value="PRK10696.1"/>
    <property type="match status" value="1"/>
</dbReference>
<dbReference type="PANTHER" id="PTHR43686:SF1">
    <property type="entry name" value="AMINOTRAN_5 DOMAIN-CONTAINING PROTEIN"/>
    <property type="match status" value="1"/>
</dbReference>
<dbReference type="PANTHER" id="PTHR43686">
    <property type="entry name" value="SULFURTRANSFERASE-RELATED"/>
    <property type="match status" value="1"/>
</dbReference>
<dbReference type="Pfam" id="PF01171">
    <property type="entry name" value="ATP_bind_3"/>
    <property type="match status" value="1"/>
</dbReference>
<dbReference type="PIRSF" id="PIRSF004976">
    <property type="entry name" value="ATPase_YdaO"/>
    <property type="match status" value="1"/>
</dbReference>
<dbReference type="SUPFAM" id="SSF52402">
    <property type="entry name" value="Adenine nucleotide alpha hydrolases-like"/>
    <property type="match status" value="1"/>
</dbReference>